<name>FLUC1_MYCPA</name>
<reference key="1">
    <citation type="journal article" date="2005" name="Proc. Natl. Acad. Sci. U.S.A.">
        <title>The complete genome sequence of Mycobacterium avium subspecies paratuberculosis.</title>
        <authorList>
            <person name="Li L."/>
            <person name="Bannantine J.P."/>
            <person name="Zhang Q."/>
            <person name="Amonsin A."/>
            <person name="May B.J."/>
            <person name="Alt D."/>
            <person name="Banerji N."/>
            <person name="Kanjilal S."/>
            <person name="Kapur V."/>
        </authorList>
    </citation>
    <scope>NUCLEOTIDE SEQUENCE [LARGE SCALE GENOMIC DNA]</scope>
    <source>
        <strain>ATCC BAA-968 / K-10</strain>
    </source>
</reference>
<accession>P61392</accession>
<comment type="function">
    <text evidence="1">Fluoride-specific ion channel. Important for reducing fluoride concentration in the cell, thus reducing its toxicity.</text>
</comment>
<comment type="catalytic activity">
    <reaction evidence="1">
        <text>fluoride(in) = fluoride(out)</text>
        <dbReference type="Rhea" id="RHEA:76159"/>
        <dbReference type="ChEBI" id="CHEBI:17051"/>
    </reaction>
    <physiologicalReaction direction="left-to-right" evidence="1">
        <dbReference type="Rhea" id="RHEA:76160"/>
    </physiologicalReaction>
</comment>
<comment type="activity regulation">
    <text evidence="1">Na(+) is not transported, but it plays an essential structural role and its presence is essential for fluoride channel function.</text>
</comment>
<comment type="subcellular location">
    <subcellularLocation>
        <location evidence="1">Cell membrane</location>
        <topology evidence="1">Multi-pass membrane protein</topology>
    </subcellularLocation>
</comment>
<comment type="similarity">
    <text evidence="1">Belongs to the fluoride channel Fluc/FEX (TC 1.A.43) family.</text>
</comment>
<protein>
    <recommendedName>
        <fullName evidence="1">Fluoride-specific ion channel FluC 1</fullName>
    </recommendedName>
</protein>
<organism>
    <name type="scientific">Mycolicibacterium paratuberculosis (strain ATCC BAA-968 / K-10)</name>
    <name type="common">Mycobacterium paratuberculosis</name>
    <dbReference type="NCBI Taxonomy" id="262316"/>
    <lineage>
        <taxon>Bacteria</taxon>
        <taxon>Bacillati</taxon>
        <taxon>Actinomycetota</taxon>
        <taxon>Actinomycetes</taxon>
        <taxon>Mycobacteriales</taxon>
        <taxon>Mycobacteriaceae</taxon>
        <taxon>Mycobacterium</taxon>
        <taxon>Mycobacterium avium complex (MAC)</taxon>
    </lineage>
</organism>
<proteinExistence type="inferred from homology"/>
<feature type="chain" id="PRO_0000110135" description="Fluoride-specific ion channel FluC 1">
    <location>
        <begin position="1"/>
        <end position="132"/>
    </location>
</feature>
<feature type="transmembrane region" description="Helical" evidence="1">
    <location>
        <begin position="9"/>
        <end position="29"/>
    </location>
</feature>
<feature type="transmembrane region" description="Helical" evidence="1">
    <location>
        <begin position="35"/>
        <end position="55"/>
    </location>
</feature>
<feature type="transmembrane region" description="Helical" evidence="1">
    <location>
        <begin position="72"/>
        <end position="89"/>
    </location>
</feature>
<feature type="transmembrane region" description="Helical" evidence="1">
    <location>
        <begin position="100"/>
        <end position="120"/>
    </location>
</feature>
<feature type="binding site" evidence="1">
    <location>
        <position position="79"/>
    </location>
    <ligand>
        <name>Na(+)</name>
        <dbReference type="ChEBI" id="CHEBI:29101"/>
        <note>structural</note>
    </ligand>
</feature>
<feature type="binding site" evidence="1">
    <location>
        <position position="82"/>
    </location>
    <ligand>
        <name>Na(+)</name>
        <dbReference type="ChEBI" id="CHEBI:29101"/>
        <note>structural</note>
    </ligand>
</feature>
<dbReference type="EMBL" id="AE016958">
    <property type="protein sequence ID" value="AAS05695.1"/>
    <property type="molecule type" value="Genomic_DNA"/>
</dbReference>
<dbReference type="SMR" id="P61392"/>
<dbReference type="STRING" id="262316.MAP_3147"/>
<dbReference type="KEGG" id="mpa:MAP_3147"/>
<dbReference type="eggNOG" id="COG0239">
    <property type="taxonomic scope" value="Bacteria"/>
</dbReference>
<dbReference type="HOGENOM" id="CLU_114342_2_3_11"/>
<dbReference type="Proteomes" id="UP000000580">
    <property type="component" value="Chromosome"/>
</dbReference>
<dbReference type="GO" id="GO:0005886">
    <property type="term" value="C:plasma membrane"/>
    <property type="evidence" value="ECO:0007669"/>
    <property type="project" value="UniProtKB-SubCell"/>
</dbReference>
<dbReference type="GO" id="GO:0062054">
    <property type="term" value="F:fluoride channel activity"/>
    <property type="evidence" value="ECO:0007669"/>
    <property type="project" value="UniProtKB-UniRule"/>
</dbReference>
<dbReference type="GO" id="GO:0046872">
    <property type="term" value="F:metal ion binding"/>
    <property type="evidence" value="ECO:0007669"/>
    <property type="project" value="UniProtKB-KW"/>
</dbReference>
<dbReference type="GO" id="GO:0140114">
    <property type="term" value="P:cellular detoxification of fluoride"/>
    <property type="evidence" value="ECO:0007669"/>
    <property type="project" value="UniProtKB-UniRule"/>
</dbReference>
<dbReference type="HAMAP" id="MF_00454">
    <property type="entry name" value="FluC"/>
    <property type="match status" value="1"/>
</dbReference>
<dbReference type="InterPro" id="IPR003691">
    <property type="entry name" value="FluC"/>
</dbReference>
<dbReference type="NCBIfam" id="NF010812">
    <property type="entry name" value="PRK14216.1"/>
    <property type="match status" value="1"/>
</dbReference>
<dbReference type="PANTHER" id="PTHR28259">
    <property type="entry name" value="FLUORIDE EXPORT PROTEIN 1-RELATED"/>
    <property type="match status" value="1"/>
</dbReference>
<dbReference type="PANTHER" id="PTHR28259:SF1">
    <property type="entry name" value="FLUORIDE EXPORT PROTEIN 1-RELATED"/>
    <property type="match status" value="1"/>
</dbReference>
<dbReference type="Pfam" id="PF02537">
    <property type="entry name" value="CRCB"/>
    <property type="match status" value="1"/>
</dbReference>
<sequence>MAQHDYRELAAVFAGGALGSLARAALSALAAGDPASWPWPTFTVNIVGAFLVGYFTTRLLERLPTSSYRRPLLGTGFCGGLTTFSTMQVETLTMLEHHHWGLAAGYTLTSIAAGLLAVHLATKLVRRVRVRR</sequence>
<keyword id="KW-1003">Cell membrane</keyword>
<keyword id="KW-0407">Ion channel</keyword>
<keyword id="KW-0406">Ion transport</keyword>
<keyword id="KW-0472">Membrane</keyword>
<keyword id="KW-0479">Metal-binding</keyword>
<keyword id="KW-1185">Reference proteome</keyword>
<keyword id="KW-0915">Sodium</keyword>
<keyword id="KW-0812">Transmembrane</keyword>
<keyword id="KW-1133">Transmembrane helix</keyword>
<keyword id="KW-0813">Transport</keyword>
<evidence type="ECO:0000255" key="1">
    <source>
        <dbReference type="HAMAP-Rule" id="MF_00454"/>
    </source>
</evidence>
<gene>
    <name evidence="1" type="primary">fluC1</name>
    <name evidence="1" type="synonym">crcB1</name>
    <name type="ordered locus">MAP_3147</name>
</gene>